<organism>
    <name type="scientific">Danio rerio</name>
    <name type="common">Zebrafish</name>
    <name type="synonym">Brachydanio rerio</name>
    <dbReference type="NCBI Taxonomy" id="7955"/>
    <lineage>
        <taxon>Eukaryota</taxon>
        <taxon>Metazoa</taxon>
        <taxon>Chordata</taxon>
        <taxon>Craniata</taxon>
        <taxon>Vertebrata</taxon>
        <taxon>Euteleostomi</taxon>
        <taxon>Actinopterygii</taxon>
        <taxon>Neopterygii</taxon>
        <taxon>Teleostei</taxon>
        <taxon>Ostariophysi</taxon>
        <taxon>Cypriniformes</taxon>
        <taxon>Danionidae</taxon>
        <taxon>Danioninae</taxon>
        <taxon>Danio</taxon>
    </lineage>
</organism>
<accession>A4IG72</accession>
<protein>
    <recommendedName>
        <fullName>Transforming growth factor-beta receptor-associated protein 1 homolog</fullName>
        <shortName>TGF-beta receptor-associated protein 1 homolog</shortName>
    </recommendedName>
</protein>
<proteinExistence type="evidence at transcript level"/>
<dbReference type="EMBL" id="BC134956">
    <property type="protein sequence ID" value="AAI34957.1"/>
    <property type="molecule type" value="mRNA"/>
</dbReference>
<dbReference type="RefSeq" id="NP_001077023.1">
    <property type="nucleotide sequence ID" value="NM_001083554.1"/>
</dbReference>
<dbReference type="FunCoup" id="A4IG72">
    <property type="interactions" value="768"/>
</dbReference>
<dbReference type="STRING" id="7955.ENSDARP00000082230"/>
<dbReference type="PaxDb" id="7955-ENSDARP00000082230"/>
<dbReference type="PeptideAtlas" id="A4IG72"/>
<dbReference type="GeneID" id="565026"/>
<dbReference type="KEGG" id="dre:565026"/>
<dbReference type="AGR" id="ZFIN:ZDB-GENE-070410-66"/>
<dbReference type="CTD" id="9392"/>
<dbReference type="ZFIN" id="ZDB-GENE-070410-66">
    <property type="gene designation" value="tgfbrap1"/>
</dbReference>
<dbReference type="eggNOG" id="KOG2063">
    <property type="taxonomic scope" value="Eukaryota"/>
</dbReference>
<dbReference type="InParanoid" id="A4IG72"/>
<dbReference type="OrthoDB" id="10258882at2759"/>
<dbReference type="PhylomeDB" id="A4IG72"/>
<dbReference type="PRO" id="PR:A4IG72"/>
<dbReference type="Proteomes" id="UP000000437">
    <property type="component" value="Chromosome 6"/>
</dbReference>
<dbReference type="GO" id="GO:0005737">
    <property type="term" value="C:cytoplasm"/>
    <property type="evidence" value="ECO:0000318"/>
    <property type="project" value="GO_Central"/>
</dbReference>
<dbReference type="GO" id="GO:0005769">
    <property type="term" value="C:early endosome"/>
    <property type="evidence" value="ECO:0007669"/>
    <property type="project" value="UniProtKB-SubCell"/>
</dbReference>
<dbReference type="GO" id="GO:0016020">
    <property type="term" value="C:membrane"/>
    <property type="evidence" value="ECO:0000318"/>
    <property type="project" value="GO_Central"/>
</dbReference>
<dbReference type="GO" id="GO:0006914">
    <property type="term" value="P:autophagy"/>
    <property type="evidence" value="ECO:0000318"/>
    <property type="project" value="GO_Central"/>
</dbReference>
<dbReference type="GO" id="GO:0034058">
    <property type="term" value="P:endosomal vesicle fusion"/>
    <property type="evidence" value="ECO:0000318"/>
    <property type="project" value="GO_Central"/>
</dbReference>
<dbReference type="GO" id="GO:0006886">
    <property type="term" value="P:intracellular protein transport"/>
    <property type="evidence" value="ECO:0007669"/>
    <property type="project" value="InterPro"/>
</dbReference>
<dbReference type="InterPro" id="IPR000547">
    <property type="entry name" value="Clathrin_H-chain/VPS_repeat"/>
</dbReference>
<dbReference type="InterPro" id="IPR001180">
    <property type="entry name" value="CNH_dom"/>
</dbReference>
<dbReference type="InterPro" id="IPR032914">
    <property type="entry name" value="Vam6/VPS39/TRAP1"/>
</dbReference>
<dbReference type="InterPro" id="IPR019452">
    <property type="entry name" value="VPS39/TGF_beta_rcpt-assoc_1"/>
</dbReference>
<dbReference type="InterPro" id="IPR019453">
    <property type="entry name" value="VPS39/TGFA1_Znf"/>
</dbReference>
<dbReference type="PANTHER" id="PTHR12894">
    <property type="entry name" value="CNH DOMAIN CONTAINING"/>
    <property type="match status" value="1"/>
</dbReference>
<dbReference type="PANTHER" id="PTHR12894:SF29">
    <property type="entry name" value="TRANSFORMING GROWTH FACTOR-BETA RECEPTOR-ASSOCIATED PROTEIN 1 HOMOLOG"/>
    <property type="match status" value="1"/>
</dbReference>
<dbReference type="Pfam" id="PF00780">
    <property type="entry name" value="CNH"/>
    <property type="match status" value="1"/>
</dbReference>
<dbReference type="Pfam" id="PF10366">
    <property type="entry name" value="Vps39_1"/>
    <property type="match status" value="1"/>
</dbReference>
<dbReference type="Pfam" id="PF10367">
    <property type="entry name" value="zf-Vps39_C"/>
    <property type="match status" value="1"/>
</dbReference>
<dbReference type="PROSITE" id="PS50236">
    <property type="entry name" value="CHCR"/>
    <property type="match status" value="1"/>
</dbReference>
<dbReference type="PROSITE" id="PS50219">
    <property type="entry name" value="CNH"/>
    <property type="match status" value="1"/>
</dbReference>
<feature type="chain" id="PRO_0000345407" description="Transforming growth factor-beta receptor-associated protein 1 homolog">
    <location>
        <begin position="1"/>
        <end position="863"/>
    </location>
</feature>
<feature type="domain" description="CNH" evidence="3">
    <location>
        <begin position="23"/>
        <end position="297"/>
    </location>
</feature>
<feature type="repeat" description="CHCR">
    <location>
        <begin position="564"/>
        <end position="729"/>
    </location>
</feature>
<evidence type="ECO:0000250" key="1"/>
<evidence type="ECO:0000250" key="2">
    <source>
        <dbReference type="UniProtKB" id="Q8WUH2"/>
    </source>
</evidence>
<evidence type="ECO:0000255" key="3">
    <source>
        <dbReference type="PROSITE-ProRule" id="PRU00795"/>
    </source>
</evidence>
<evidence type="ECO:0000305" key="4"/>
<comment type="function">
    <text evidence="2">Plays a role in the TGF-beta signaling pathway.</text>
</comment>
<comment type="function">
    <text evidence="2">Plays a role in vesicle-mediated protein trafficking of the endocytic membrane transport pathway. Believed to act as a component of the putative CORVET endosomal tethering complexes which is proposed to be involved in the Rab5-to-Rab7 endosome conversion probably implicating MON1A/B, and via binding SNAREs and SNARE complexes to mediate tethering and docking events during SNARE-mediated membrane fusion. The CORVET complex is proposed to function as a Rab5 effector to mediate early endosome fusion probably in specific endosome subpopulations (By similarity).</text>
</comment>
<comment type="subunit">
    <text evidence="2">Component of the putative class C core vacuole/endosome tethering (CORVET) complex (By similarity).</text>
</comment>
<comment type="subcellular location">
    <subcellularLocation>
        <location evidence="1">Cytoplasm</location>
    </subcellularLocation>
    <subcellularLocation>
        <location evidence="2">Early endosome</location>
    </subcellularLocation>
</comment>
<comment type="similarity">
    <text evidence="4">Belongs to the TRAP1 family.</text>
</comment>
<name>TGFA1_DANRE</name>
<gene>
    <name type="primary">tgfbrap1</name>
    <name type="ORF">zgc:162302</name>
</gene>
<sequence length="863" mass="97048">MSVKAFDLVPAVEREQVMGEKVRINIECIECCGQHLYLGTNDCFIHHFLLEEHTTAKGKLAFNAQKLLHKYLGLKKPVVELKAASALERLIVLCDSAITVVDMVTLEPVPTGGAKLKGVTAFCINENPVTGDAFCVEMAVVLARRRAVQICTVHEDRVQMLKEVTTPEQPCALSLDGYNICLALSTQYMILNYSTGASQDLFPYDCEERKPIVKRIGREEFLLAAPGGLGMFANAEGISQRAPVSWSENVIAAAVCFPYVVALDEGFVTVHSMLDQQLKQTLSFRDGQLLQDFEGKVVVASSKAVYMLVPLPLERQIQDLLASHRVEEALTLTEAAQRNIPKEKYQILHRRILQQAGFIQFGQLQFLEAKEHFRKGQLDVRELISLYPLLLPASSSFTRCHPPLHEFADLNHLTQGDQEKVQRFKRFLISYLHEVRSSDIANGFHEDVDTALLKLYAETSHESLLDLLASENACLLADSAPWLEKHHKYYALGLLYHYNGQDAAALQMWVKIVNGDLQDSTRPDLFEYVVDFLSFCSNLDLVWRHADWALQKDQKIGVQIFTKRPTSEERRGQLNADDVITYLQKHSQALLLYLEHLVLEKKLQKEKYHTHLAVLYAEKVLGLISRPSTSEEQLSAARQKLQRLLKESNLYRVQLLLGKIQDSELLLLERATLHGKLEEHDKALHVLVHQLKDSSAAEEYCSWASASQDSSYRQNLFHQLLSVYLDPDVPGGAQTVAAVDLLNRHAEVFDAVRVLKLLPEDWSLPLLRPFLCGAMRATVHARCTSQVALGLARAQNLQLLHDRLKYRGGPVLVSEKKGCQLCHNTFSEPDCACLPGGTPVHINCVAKKALDLPHENAHHSNHT</sequence>
<keyword id="KW-0963">Cytoplasm</keyword>
<keyword id="KW-0967">Endosome</keyword>
<keyword id="KW-1185">Reference proteome</keyword>
<reference key="1">
    <citation type="submission" date="2007-03" db="EMBL/GenBank/DDBJ databases">
        <authorList>
            <consortium name="NIH - Zebrafish Gene Collection (ZGC) project"/>
        </authorList>
    </citation>
    <scope>NUCLEOTIDE SEQUENCE [LARGE SCALE MRNA]</scope>
    <source>
        <strain>WIK</strain>
        <tissue>Ovary</tissue>
    </source>
</reference>